<organism>
    <name type="scientific">Vesicomyosocius okutanii subsp. Calyptogena okutanii (strain HA)</name>
    <dbReference type="NCBI Taxonomy" id="412965"/>
    <lineage>
        <taxon>Bacteria</taxon>
        <taxon>Pseudomonadati</taxon>
        <taxon>Pseudomonadota</taxon>
        <taxon>Gammaproteobacteria</taxon>
        <taxon>Candidatus Pseudothioglobaceae</taxon>
        <taxon>Candidatus Vesicomyosocius</taxon>
    </lineage>
</organism>
<protein>
    <recommendedName>
        <fullName evidence="1">Fe/S biogenesis protein NfuA</fullName>
    </recommendedName>
</protein>
<feature type="chain" id="PRO_1000186785" description="Fe/S biogenesis protein NfuA">
    <location>
        <begin position="1"/>
        <end position="192"/>
    </location>
</feature>
<feature type="binding site" evidence="1">
    <location>
        <position position="150"/>
    </location>
    <ligand>
        <name>[4Fe-4S] cluster</name>
        <dbReference type="ChEBI" id="CHEBI:49883"/>
    </ligand>
</feature>
<feature type="binding site" evidence="1">
    <location>
        <position position="153"/>
    </location>
    <ligand>
        <name>[4Fe-4S] cluster</name>
        <dbReference type="ChEBI" id="CHEBI:49883"/>
    </ligand>
</feature>
<accession>A5CX22</accession>
<keyword id="KW-0004">4Fe-4S</keyword>
<keyword id="KW-0408">Iron</keyword>
<keyword id="KW-0411">Iron-sulfur</keyword>
<keyword id="KW-0479">Metal-binding</keyword>
<keyword id="KW-1185">Reference proteome</keyword>
<comment type="function">
    <text evidence="1">Involved in iron-sulfur cluster biogenesis. Binds a 4Fe-4S cluster, can transfer this cluster to apoproteins, and thereby intervenes in the maturation of Fe/S proteins. Could also act as a scaffold/chaperone for damaged Fe/S proteins.</text>
</comment>
<comment type="cofactor">
    <cofactor evidence="1">
        <name>[4Fe-4S] cluster</name>
        <dbReference type="ChEBI" id="CHEBI:49883"/>
    </cofactor>
    <text evidence="1">Binds 1 [4Fe-4S] cluster per subunit. The cluster is presumably bound at the interface of two monomers.</text>
</comment>
<comment type="subunit">
    <text evidence="1">Homodimer.</text>
</comment>
<comment type="similarity">
    <text evidence="1">Belongs to the NfuA family.</text>
</comment>
<reference key="1">
    <citation type="journal article" date="2007" name="Curr. Biol.">
        <title>Reduced genome of the thioautotrophic intracellular symbiont in a deep-sea clam, Calyptogena okutanii.</title>
        <authorList>
            <person name="Kuwahara H."/>
            <person name="Yoshida T."/>
            <person name="Takaki Y."/>
            <person name="Shimamura S."/>
            <person name="Nishi S."/>
            <person name="Harada M."/>
            <person name="Matsuyama K."/>
            <person name="Takishita K."/>
            <person name="Kawato M."/>
            <person name="Uematsu K."/>
            <person name="Fujiwara Y."/>
            <person name="Sato T."/>
            <person name="Kato C."/>
            <person name="Kitagawa M."/>
            <person name="Kato I."/>
            <person name="Maruyama T."/>
        </authorList>
    </citation>
    <scope>NUCLEOTIDE SEQUENCE [LARGE SCALE GENOMIC DNA]</scope>
    <source>
        <strain>HA</strain>
    </source>
</reference>
<dbReference type="EMBL" id="AP009247">
    <property type="protein sequence ID" value="BAF61508.1"/>
    <property type="molecule type" value="Genomic_DNA"/>
</dbReference>
<dbReference type="RefSeq" id="WP_011929778.1">
    <property type="nucleotide sequence ID" value="NC_009465.1"/>
</dbReference>
<dbReference type="SMR" id="A5CX22"/>
<dbReference type="STRING" id="412965.COSY_0386"/>
<dbReference type="KEGG" id="vok:COSY_0386"/>
<dbReference type="eggNOG" id="COG0316">
    <property type="taxonomic scope" value="Bacteria"/>
</dbReference>
<dbReference type="eggNOG" id="COG0694">
    <property type="taxonomic scope" value="Bacteria"/>
</dbReference>
<dbReference type="HOGENOM" id="CLU_094569_0_0_6"/>
<dbReference type="OrthoDB" id="9785450at2"/>
<dbReference type="Proteomes" id="UP000000247">
    <property type="component" value="Chromosome"/>
</dbReference>
<dbReference type="GO" id="GO:0051539">
    <property type="term" value="F:4 iron, 4 sulfur cluster binding"/>
    <property type="evidence" value="ECO:0007669"/>
    <property type="project" value="UniProtKB-UniRule"/>
</dbReference>
<dbReference type="GO" id="GO:0005506">
    <property type="term" value="F:iron ion binding"/>
    <property type="evidence" value="ECO:0007669"/>
    <property type="project" value="InterPro"/>
</dbReference>
<dbReference type="GO" id="GO:0016226">
    <property type="term" value="P:iron-sulfur cluster assembly"/>
    <property type="evidence" value="ECO:0007669"/>
    <property type="project" value="UniProtKB-UniRule"/>
</dbReference>
<dbReference type="GO" id="GO:0051604">
    <property type="term" value="P:protein maturation"/>
    <property type="evidence" value="ECO:0007669"/>
    <property type="project" value="UniProtKB-UniRule"/>
</dbReference>
<dbReference type="Gene3D" id="3.30.300.130">
    <property type="entry name" value="Fe-S cluster assembly (FSCA)"/>
    <property type="match status" value="1"/>
</dbReference>
<dbReference type="Gene3D" id="2.60.300.12">
    <property type="entry name" value="HesB-like domain"/>
    <property type="match status" value="1"/>
</dbReference>
<dbReference type="HAMAP" id="MF_01637">
    <property type="entry name" value="Fe_S_biogen_NfuA"/>
    <property type="match status" value="1"/>
</dbReference>
<dbReference type="InterPro" id="IPR017726">
    <property type="entry name" value="Fe/S_biogenesis_protein_NfuA"/>
</dbReference>
<dbReference type="InterPro" id="IPR034904">
    <property type="entry name" value="FSCA_dom_sf"/>
</dbReference>
<dbReference type="InterPro" id="IPR035903">
    <property type="entry name" value="HesB-like_dom_sf"/>
</dbReference>
<dbReference type="InterPro" id="IPR001075">
    <property type="entry name" value="NIF_FeS_clus_asmbl_NifU_C"/>
</dbReference>
<dbReference type="PANTHER" id="PTHR11178:SF51">
    <property type="entry name" value="FE_S BIOGENESIS PROTEIN NFUA"/>
    <property type="match status" value="1"/>
</dbReference>
<dbReference type="PANTHER" id="PTHR11178">
    <property type="entry name" value="IRON-SULFUR CLUSTER SCAFFOLD PROTEIN NFU-RELATED"/>
    <property type="match status" value="1"/>
</dbReference>
<dbReference type="Pfam" id="PF01106">
    <property type="entry name" value="NifU"/>
    <property type="match status" value="1"/>
</dbReference>
<dbReference type="SUPFAM" id="SSF117916">
    <property type="entry name" value="Fe-S cluster assembly (FSCA) domain-like"/>
    <property type="match status" value="1"/>
</dbReference>
<dbReference type="SUPFAM" id="SSF89360">
    <property type="entry name" value="HesB-like domain"/>
    <property type="match status" value="1"/>
</dbReference>
<name>NFUA_VESOH</name>
<sequence length="192" mass="21140">MFNITDKAKVYMADLFAQQDEKDLGLKVDIEKAGTPAATVIFNFCFPKELSKTYQKFEYKGFDVYINKLNFVYLKDSEVALKDSSVGKKLIITAPNAKGEEPKEDAPLEEKIKYVIAADITPGLASHGGFVELVGITKQIDVILNFGGGCQGCSSVKSTLEQGVEAQLKARFPEIKSVRDVTNHANTDNAYM</sequence>
<proteinExistence type="inferred from homology"/>
<evidence type="ECO:0000255" key="1">
    <source>
        <dbReference type="HAMAP-Rule" id="MF_01637"/>
    </source>
</evidence>
<gene>
    <name evidence="1" type="primary">nfuA</name>
    <name type="ordered locus">COSY_0386</name>
</gene>